<dbReference type="EC" id="2.7.7.8" evidence="1"/>
<dbReference type="EMBL" id="AE017126">
    <property type="protein sequence ID" value="AAQ00351.1"/>
    <property type="molecule type" value="Genomic_DNA"/>
</dbReference>
<dbReference type="RefSeq" id="NP_875698.1">
    <property type="nucleotide sequence ID" value="NC_005042.1"/>
</dbReference>
<dbReference type="RefSeq" id="WP_011125458.1">
    <property type="nucleotide sequence ID" value="NC_005042.1"/>
</dbReference>
<dbReference type="SMR" id="Q7VAZ5"/>
<dbReference type="STRING" id="167539.Pro_1307"/>
<dbReference type="EnsemblBacteria" id="AAQ00351">
    <property type="protein sequence ID" value="AAQ00351"/>
    <property type="gene ID" value="Pro_1307"/>
</dbReference>
<dbReference type="KEGG" id="pma:Pro_1307"/>
<dbReference type="PATRIC" id="fig|167539.5.peg.1372"/>
<dbReference type="eggNOG" id="COG1185">
    <property type="taxonomic scope" value="Bacteria"/>
</dbReference>
<dbReference type="HOGENOM" id="CLU_004217_2_2_3"/>
<dbReference type="OrthoDB" id="9804305at2"/>
<dbReference type="Proteomes" id="UP000001420">
    <property type="component" value="Chromosome"/>
</dbReference>
<dbReference type="GO" id="GO:0005829">
    <property type="term" value="C:cytosol"/>
    <property type="evidence" value="ECO:0007669"/>
    <property type="project" value="TreeGrafter"/>
</dbReference>
<dbReference type="GO" id="GO:0000175">
    <property type="term" value="F:3'-5'-RNA exonuclease activity"/>
    <property type="evidence" value="ECO:0007669"/>
    <property type="project" value="TreeGrafter"/>
</dbReference>
<dbReference type="GO" id="GO:0000287">
    <property type="term" value="F:magnesium ion binding"/>
    <property type="evidence" value="ECO:0007669"/>
    <property type="project" value="UniProtKB-UniRule"/>
</dbReference>
<dbReference type="GO" id="GO:0004654">
    <property type="term" value="F:polyribonucleotide nucleotidyltransferase activity"/>
    <property type="evidence" value="ECO:0007669"/>
    <property type="project" value="UniProtKB-UniRule"/>
</dbReference>
<dbReference type="GO" id="GO:0003723">
    <property type="term" value="F:RNA binding"/>
    <property type="evidence" value="ECO:0007669"/>
    <property type="project" value="UniProtKB-UniRule"/>
</dbReference>
<dbReference type="GO" id="GO:0006402">
    <property type="term" value="P:mRNA catabolic process"/>
    <property type="evidence" value="ECO:0007669"/>
    <property type="project" value="UniProtKB-UniRule"/>
</dbReference>
<dbReference type="GO" id="GO:0006396">
    <property type="term" value="P:RNA processing"/>
    <property type="evidence" value="ECO:0007669"/>
    <property type="project" value="InterPro"/>
</dbReference>
<dbReference type="CDD" id="cd02393">
    <property type="entry name" value="KH-I_PNPase"/>
    <property type="match status" value="1"/>
</dbReference>
<dbReference type="CDD" id="cd11363">
    <property type="entry name" value="RNase_PH_PNPase_1"/>
    <property type="match status" value="1"/>
</dbReference>
<dbReference type="CDD" id="cd11364">
    <property type="entry name" value="RNase_PH_PNPase_2"/>
    <property type="match status" value="1"/>
</dbReference>
<dbReference type="FunFam" id="2.40.50.140:FF:000023">
    <property type="entry name" value="Polyribonucleotide nucleotidyltransferase"/>
    <property type="match status" value="1"/>
</dbReference>
<dbReference type="FunFam" id="3.30.1370.10:FF:000001">
    <property type="entry name" value="Polyribonucleotide nucleotidyltransferase"/>
    <property type="match status" value="1"/>
</dbReference>
<dbReference type="FunFam" id="3.30.230.70:FF:000001">
    <property type="entry name" value="Polyribonucleotide nucleotidyltransferase"/>
    <property type="match status" value="1"/>
</dbReference>
<dbReference type="FunFam" id="3.30.230.70:FF:000002">
    <property type="entry name" value="Polyribonucleotide nucleotidyltransferase"/>
    <property type="match status" value="1"/>
</dbReference>
<dbReference type="Gene3D" id="3.30.230.70">
    <property type="entry name" value="GHMP Kinase, N-terminal domain"/>
    <property type="match status" value="2"/>
</dbReference>
<dbReference type="Gene3D" id="3.30.1370.10">
    <property type="entry name" value="K Homology domain, type 1"/>
    <property type="match status" value="1"/>
</dbReference>
<dbReference type="Gene3D" id="2.40.50.140">
    <property type="entry name" value="Nucleic acid-binding proteins"/>
    <property type="match status" value="1"/>
</dbReference>
<dbReference type="HAMAP" id="MF_01595">
    <property type="entry name" value="PNPase"/>
    <property type="match status" value="1"/>
</dbReference>
<dbReference type="InterPro" id="IPR001247">
    <property type="entry name" value="ExoRNase_PH_dom1"/>
</dbReference>
<dbReference type="InterPro" id="IPR015847">
    <property type="entry name" value="ExoRNase_PH_dom2"/>
</dbReference>
<dbReference type="InterPro" id="IPR036345">
    <property type="entry name" value="ExoRNase_PH_dom2_sf"/>
</dbReference>
<dbReference type="InterPro" id="IPR004087">
    <property type="entry name" value="KH_dom"/>
</dbReference>
<dbReference type="InterPro" id="IPR004088">
    <property type="entry name" value="KH_dom_type_1"/>
</dbReference>
<dbReference type="InterPro" id="IPR036612">
    <property type="entry name" value="KH_dom_type_1_sf"/>
</dbReference>
<dbReference type="InterPro" id="IPR012340">
    <property type="entry name" value="NA-bd_OB-fold"/>
</dbReference>
<dbReference type="InterPro" id="IPR012162">
    <property type="entry name" value="PNPase"/>
</dbReference>
<dbReference type="InterPro" id="IPR027408">
    <property type="entry name" value="PNPase/RNase_PH_dom_sf"/>
</dbReference>
<dbReference type="InterPro" id="IPR015848">
    <property type="entry name" value="PNPase_PH_RNA-bd_bac/org-type"/>
</dbReference>
<dbReference type="InterPro" id="IPR036456">
    <property type="entry name" value="PNPase_PH_RNA-bd_sf"/>
</dbReference>
<dbReference type="InterPro" id="IPR020568">
    <property type="entry name" value="Ribosomal_Su5_D2-typ_SF"/>
</dbReference>
<dbReference type="InterPro" id="IPR003029">
    <property type="entry name" value="S1_domain"/>
</dbReference>
<dbReference type="NCBIfam" id="TIGR03591">
    <property type="entry name" value="polynuc_phos"/>
    <property type="match status" value="1"/>
</dbReference>
<dbReference type="NCBIfam" id="NF008805">
    <property type="entry name" value="PRK11824.1"/>
    <property type="match status" value="1"/>
</dbReference>
<dbReference type="PANTHER" id="PTHR11252">
    <property type="entry name" value="POLYRIBONUCLEOTIDE NUCLEOTIDYLTRANSFERASE"/>
    <property type="match status" value="1"/>
</dbReference>
<dbReference type="PANTHER" id="PTHR11252:SF0">
    <property type="entry name" value="POLYRIBONUCLEOTIDE NUCLEOTIDYLTRANSFERASE 1, MITOCHONDRIAL"/>
    <property type="match status" value="1"/>
</dbReference>
<dbReference type="Pfam" id="PF00013">
    <property type="entry name" value="KH_1"/>
    <property type="match status" value="1"/>
</dbReference>
<dbReference type="Pfam" id="PF03726">
    <property type="entry name" value="PNPase"/>
    <property type="match status" value="1"/>
</dbReference>
<dbReference type="Pfam" id="PF01138">
    <property type="entry name" value="RNase_PH"/>
    <property type="match status" value="2"/>
</dbReference>
<dbReference type="Pfam" id="PF03725">
    <property type="entry name" value="RNase_PH_C"/>
    <property type="match status" value="1"/>
</dbReference>
<dbReference type="Pfam" id="PF00575">
    <property type="entry name" value="S1"/>
    <property type="match status" value="1"/>
</dbReference>
<dbReference type="PIRSF" id="PIRSF005499">
    <property type="entry name" value="PNPase"/>
    <property type="match status" value="1"/>
</dbReference>
<dbReference type="SMART" id="SM00322">
    <property type="entry name" value="KH"/>
    <property type="match status" value="1"/>
</dbReference>
<dbReference type="SMART" id="SM00316">
    <property type="entry name" value="S1"/>
    <property type="match status" value="1"/>
</dbReference>
<dbReference type="SUPFAM" id="SSF54791">
    <property type="entry name" value="Eukaryotic type KH-domain (KH-domain type I)"/>
    <property type="match status" value="1"/>
</dbReference>
<dbReference type="SUPFAM" id="SSF50249">
    <property type="entry name" value="Nucleic acid-binding proteins"/>
    <property type="match status" value="1"/>
</dbReference>
<dbReference type="SUPFAM" id="SSF46915">
    <property type="entry name" value="Polynucleotide phosphorylase/guanosine pentaphosphate synthase (PNPase/GPSI), domain 3"/>
    <property type="match status" value="1"/>
</dbReference>
<dbReference type="SUPFAM" id="SSF55666">
    <property type="entry name" value="Ribonuclease PH domain 2-like"/>
    <property type="match status" value="2"/>
</dbReference>
<dbReference type="SUPFAM" id="SSF54211">
    <property type="entry name" value="Ribosomal protein S5 domain 2-like"/>
    <property type="match status" value="2"/>
</dbReference>
<dbReference type="PROSITE" id="PS50084">
    <property type="entry name" value="KH_TYPE_1"/>
    <property type="match status" value="1"/>
</dbReference>
<dbReference type="PROSITE" id="PS50126">
    <property type="entry name" value="S1"/>
    <property type="match status" value="1"/>
</dbReference>
<feature type="chain" id="PRO_0000329763" description="Polyribonucleotide nucleotidyltransferase">
    <location>
        <begin position="1"/>
        <end position="722"/>
    </location>
</feature>
<feature type="domain" description="KH" evidence="1">
    <location>
        <begin position="562"/>
        <end position="621"/>
    </location>
</feature>
<feature type="domain" description="S1 motif" evidence="1">
    <location>
        <begin position="631"/>
        <end position="699"/>
    </location>
</feature>
<feature type="binding site" evidence="1">
    <location>
        <position position="495"/>
    </location>
    <ligand>
        <name>Mg(2+)</name>
        <dbReference type="ChEBI" id="CHEBI:18420"/>
    </ligand>
</feature>
<feature type="binding site" evidence="1">
    <location>
        <position position="501"/>
    </location>
    <ligand>
        <name>Mg(2+)</name>
        <dbReference type="ChEBI" id="CHEBI:18420"/>
    </ligand>
</feature>
<accession>Q7VAZ5</accession>
<sequence length="722" mass="78463">MQGQTTSVSFDGREIRLTTGRYAPQAGGSVLIECGDTAVLVTATQGQGREGADFLPLSCDYEERLYAAGRIPGSFMRREGRPPERATLISRLIDRPLRPLFPNWMRDDIQVVATCLSLDERVPADILAVTGSSMATLLAGIPFYGPMAAVRVGLLGDDFVLNPSFREIERGDLDLVVAGTPDGVVMVEAGSNQLTEQDVIEAIDFGYEAVNELIKAQESILKDSGLTQIKPEKPDLDETVPSYLEKNCTKPISALLKEFDLSKEDRDLKLDEIKTNCAEKIDSLKDDNAVKKSITTNTKLLGISFKALTKKLMREQIIKDGKRVDGRALDEVREISAEAGILPKRVHGSGLFQRGLTQVLSTATLGTPSDAQEMDDLNPSPDKTYIHHYNFPPYSVGETRPMRTPGRREVGHGALAERAIIPVLPPKESFPYVLRVVSEVLSSNGSTSMGSVCGSTIALLDAGVPLKAPVSGAAMGLIKEGEEVRILTDIQGIEDFLGDMDFKVAGTEKGITALQMDMKMTGLPIKIIGEAINQAKPARTHILEKMVQAIDKPRETLSPHAPRLLSFRIDPELIGTVIGPGGRTIKGITERTNTKIDIEDGGIVTIASHDGVAAEEAQKIIEGLTRKVHEGEVFTGSITRIIPIGAFVEILPGKEGMIHISQLSEARVEKVEDVVKVGDEVTVRVREIDNRGRINLTLRGIPQNGDMQYYPQPTPTPVAPLM</sequence>
<gene>
    <name evidence="1" type="primary">pnp</name>
    <name type="ordered locus">Pro_1307</name>
</gene>
<comment type="function">
    <text evidence="1">Involved in mRNA degradation. Catalyzes the phosphorolysis of single-stranded polyribonucleotides processively in the 3'- to 5'-direction.</text>
</comment>
<comment type="catalytic activity">
    <reaction evidence="1">
        <text>RNA(n+1) + phosphate = RNA(n) + a ribonucleoside 5'-diphosphate</text>
        <dbReference type="Rhea" id="RHEA:22096"/>
        <dbReference type="Rhea" id="RHEA-COMP:14527"/>
        <dbReference type="Rhea" id="RHEA-COMP:17342"/>
        <dbReference type="ChEBI" id="CHEBI:43474"/>
        <dbReference type="ChEBI" id="CHEBI:57930"/>
        <dbReference type="ChEBI" id="CHEBI:140395"/>
        <dbReference type="EC" id="2.7.7.8"/>
    </reaction>
</comment>
<comment type="cofactor">
    <cofactor evidence="1">
        <name>Mg(2+)</name>
        <dbReference type="ChEBI" id="CHEBI:18420"/>
    </cofactor>
</comment>
<comment type="subcellular location">
    <subcellularLocation>
        <location evidence="1">Cytoplasm</location>
    </subcellularLocation>
</comment>
<comment type="similarity">
    <text evidence="1">Belongs to the polyribonucleotide nucleotidyltransferase family.</text>
</comment>
<evidence type="ECO:0000255" key="1">
    <source>
        <dbReference type="HAMAP-Rule" id="MF_01595"/>
    </source>
</evidence>
<organism>
    <name type="scientific">Prochlorococcus marinus (strain SARG / CCMP1375 / SS120)</name>
    <dbReference type="NCBI Taxonomy" id="167539"/>
    <lineage>
        <taxon>Bacteria</taxon>
        <taxon>Bacillati</taxon>
        <taxon>Cyanobacteriota</taxon>
        <taxon>Cyanophyceae</taxon>
        <taxon>Synechococcales</taxon>
        <taxon>Prochlorococcaceae</taxon>
        <taxon>Prochlorococcus</taxon>
    </lineage>
</organism>
<keyword id="KW-0963">Cytoplasm</keyword>
<keyword id="KW-0460">Magnesium</keyword>
<keyword id="KW-0479">Metal-binding</keyword>
<keyword id="KW-0548">Nucleotidyltransferase</keyword>
<keyword id="KW-1185">Reference proteome</keyword>
<keyword id="KW-0694">RNA-binding</keyword>
<keyword id="KW-0808">Transferase</keyword>
<reference key="1">
    <citation type="journal article" date="2003" name="Proc. Natl. Acad. Sci. U.S.A.">
        <title>Genome sequence of the cyanobacterium Prochlorococcus marinus SS120, a nearly minimal oxyphototrophic genome.</title>
        <authorList>
            <person name="Dufresne A."/>
            <person name="Salanoubat M."/>
            <person name="Partensky F."/>
            <person name="Artiguenave F."/>
            <person name="Axmann I.M."/>
            <person name="Barbe V."/>
            <person name="Duprat S."/>
            <person name="Galperin M.Y."/>
            <person name="Koonin E.V."/>
            <person name="Le Gall F."/>
            <person name="Makarova K.S."/>
            <person name="Ostrowski M."/>
            <person name="Oztas S."/>
            <person name="Robert C."/>
            <person name="Rogozin I.B."/>
            <person name="Scanlan D.J."/>
            <person name="Tandeau de Marsac N."/>
            <person name="Weissenbach J."/>
            <person name="Wincker P."/>
            <person name="Wolf Y.I."/>
            <person name="Hess W.R."/>
        </authorList>
    </citation>
    <scope>NUCLEOTIDE SEQUENCE [LARGE SCALE GENOMIC DNA]</scope>
    <source>
        <strain>SARG / CCMP1375 / SS120</strain>
    </source>
</reference>
<protein>
    <recommendedName>
        <fullName evidence="1">Polyribonucleotide nucleotidyltransferase</fullName>
        <ecNumber evidence="1">2.7.7.8</ecNumber>
    </recommendedName>
    <alternativeName>
        <fullName evidence="1">Polynucleotide phosphorylase</fullName>
        <shortName evidence="1">PNPase</shortName>
    </alternativeName>
</protein>
<proteinExistence type="inferred from homology"/>
<name>PNP_PROMA</name>